<protein>
    <recommendedName>
        <fullName>NADH-ubiquinone oxidoreductase chain 5</fullName>
        <ecNumber>7.1.1.2</ecNumber>
    </recommendedName>
    <alternativeName>
        <fullName>NADH dehydrogenase subunit 5</fullName>
    </alternativeName>
</protein>
<sequence>MYNAISLIIILPCISWLFPLFFGRQLGYVFVTRMTSTLIIITTLITYYYFYQLLGNNNPINLELFNYLNIDYLDINYNFEIDALTITMLLAITTISSMVHIYSIGYMETDPHQVRFFSLLSMFTFWMIILVTGSNYFVLFVGWEFIGVTSYLLISFWVTRLQAMKSALSAVLMNRFGDAFFVLGLCVIAYVFGTLNYSTIFATAYLINTDLLVLIMLALFIAAMAKSAQFGLHNWLTLAMEGPTPVSSLLHAATLVTAGIYLLLRSANILEYTPTVLFIILWIGALTTLSAGLIAICSNDLKRIIALSTMSQLGMMTIAIGLSAYNLALFHLLGHAFFKALLFMSAGSIIHSILNESQDIRTYGGLLSYLPYTYICITIASLSLMAMPGLTGYYTKDIIIESTYGSYSISNYVVYWIAYLSAVLTCVYSMKILYLTFYSNPNNNTITYYNAHESNIYITLPMFILAIFAMFAGWILKDIYLGVGTDFVGTHILPNNFSYFDTEFSITQFYKLLPLISAILVSILIVVLNEFFAIVFNLNNKYINTVYSIFNQKLVSDQILNHFIIFKGLVTSGNIAHHVDKGSLYRLGPVGINRLLNKASYNVINLSSNTRSSLSMNSMLILITIVSLLLLVLVMNVNFIIVIPVLISILYILFS</sequence>
<comment type="function">
    <text>Core subunit of the mitochondrial membrane respiratory chain NADH dehydrogenase (Complex I) that is believed to belong to the minimal assembly required for catalysis. Complex I functions in the transfer of electrons from NADH to the respiratory chain. The immediate electron acceptor for the enzyme is believed to be ubiquinone.</text>
</comment>
<comment type="catalytic activity">
    <reaction>
        <text>a ubiquinone + NADH + 5 H(+)(in) = a ubiquinol + NAD(+) + 4 H(+)(out)</text>
        <dbReference type="Rhea" id="RHEA:29091"/>
        <dbReference type="Rhea" id="RHEA-COMP:9565"/>
        <dbReference type="Rhea" id="RHEA-COMP:9566"/>
        <dbReference type="ChEBI" id="CHEBI:15378"/>
        <dbReference type="ChEBI" id="CHEBI:16389"/>
        <dbReference type="ChEBI" id="CHEBI:17976"/>
        <dbReference type="ChEBI" id="CHEBI:57540"/>
        <dbReference type="ChEBI" id="CHEBI:57945"/>
        <dbReference type="EC" id="7.1.1.2"/>
    </reaction>
</comment>
<comment type="subunit">
    <text evidence="3">Complex I is composed of 37 different subunits.</text>
</comment>
<comment type="subcellular location">
    <subcellularLocation>
        <location evidence="1">Mitochondrion inner membrane</location>
        <topology evidence="1">Multi-pass membrane protein</topology>
    </subcellularLocation>
</comment>
<comment type="similarity">
    <text evidence="4">Belongs to the complex I subunit 5 family.</text>
</comment>
<name>NU5M_YARLI</name>
<accession>Q9B6D3</accession>
<gene>
    <name type="primary">ND5</name>
</gene>
<dbReference type="EC" id="7.1.1.2"/>
<dbReference type="EMBL" id="AJ307410">
    <property type="protein sequence ID" value="CAC28107.2"/>
    <property type="molecule type" value="Genomic_DNA"/>
</dbReference>
<dbReference type="RefSeq" id="NP_075440.2">
    <property type="nucleotide sequence ID" value="NC_002659.1"/>
</dbReference>
<dbReference type="PDB" id="6GCS">
    <property type="method" value="EM"/>
    <property type="resolution" value="4.32 A"/>
    <property type="chains" value="5=1-655"/>
</dbReference>
<dbReference type="PDB" id="6H8K">
    <property type="method" value="X-ray"/>
    <property type="resolution" value="3.79 A"/>
    <property type="chains" value="5=73-653"/>
</dbReference>
<dbReference type="PDB" id="6RFQ">
    <property type="method" value="EM"/>
    <property type="resolution" value="3.30 A"/>
    <property type="chains" value="5=1-655"/>
</dbReference>
<dbReference type="PDB" id="6RFR">
    <property type="method" value="EM"/>
    <property type="resolution" value="3.20 A"/>
    <property type="chains" value="5=1-655"/>
</dbReference>
<dbReference type="PDB" id="6RFS">
    <property type="method" value="EM"/>
    <property type="resolution" value="4.04 A"/>
    <property type="chains" value="5=1-655"/>
</dbReference>
<dbReference type="PDB" id="6Y79">
    <property type="method" value="EM"/>
    <property type="resolution" value="3.20 A"/>
    <property type="chains" value="5=1-655"/>
</dbReference>
<dbReference type="PDB" id="6YJ4">
    <property type="method" value="EM"/>
    <property type="resolution" value="2.70 A"/>
    <property type="chains" value="L=1-655"/>
</dbReference>
<dbReference type="PDB" id="7O6Y">
    <property type="method" value="EM"/>
    <property type="resolution" value="3.40 A"/>
    <property type="chains" value="5=1-655"/>
</dbReference>
<dbReference type="PDB" id="7O71">
    <property type="method" value="EM"/>
    <property type="resolution" value="2.40 A"/>
    <property type="chains" value="5=1-655"/>
</dbReference>
<dbReference type="PDBsum" id="6GCS"/>
<dbReference type="PDBsum" id="6H8K"/>
<dbReference type="PDBsum" id="6RFQ"/>
<dbReference type="PDBsum" id="6RFR"/>
<dbReference type="PDBsum" id="6RFS"/>
<dbReference type="PDBsum" id="6Y79"/>
<dbReference type="PDBsum" id="6YJ4"/>
<dbReference type="PDBsum" id="7O6Y"/>
<dbReference type="PDBsum" id="7O71"/>
<dbReference type="EMDB" id="EMD-10815"/>
<dbReference type="EMDB" id="EMD-12742"/>
<dbReference type="EMDB" id="EMD-4384"/>
<dbReference type="SMR" id="Q9B6D3"/>
<dbReference type="DIP" id="DIP-61441N"/>
<dbReference type="IntAct" id="Q9B6D3">
    <property type="interactions" value="2"/>
</dbReference>
<dbReference type="STRING" id="284591.Q9B6D3"/>
<dbReference type="GeneID" id="802624"/>
<dbReference type="KEGG" id="yli:802624"/>
<dbReference type="InParanoid" id="Q9B6D3"/>
<dbReference type="Proteomes" id="UP000001300">
    <property type="component" value="Mitochondrion"/>
</dbReference>
<dbReference type="GO" id="GO:0005743">
    <property type="term" value="C:mitochondrial inner membrane"/>
    <property type="evidence" value="ECO:0007669"/>
    <property type="project" value="UniProtKB-SubCell"/>
</dbReference>
<dbReference type="GO" id="GO:0045271">
    <property type="term" value="C:respiratory chain complex I"/>
    <property type="evidence" value="ECO:0000318"/>
    <property type="project" value="GO_Central"/>
</dbReference>
<dbReference type="GO" id="GO:0008137">
    <property type="term" value="F:NADH dehydrogenase (ubiquinone) activity"/>
    <property type="evidence" value="ECO:0007669"/>
    <property type="project" value="UniProtKB-EC"/>
</dbReference>
<dbReference type="GO" id="GO:0042773">
    <property type="term" value="P:ATP synthesis coupled electron transport"/>
    <property type="evidence" value="ECO:0007669"/>
    <property type="project" value="InterPro"/>
</dbReference>
<dbReference type="GO" id="GO:0015990">
    <property type="term" value="P:electron transport coupled proton transport"/>
    <property type="evidence" value="ECO:0000318"/>
    <property type="project" value="GO_Central"/>
</dbReference>
<dbReference type="InterPro" id="IPR018393">
    <property type="entry name" value="NADHpl_OxRdtase_5_subgr"/>
</dbReference>
<dbReference type="InterPro" id="IPR001750">
    <property type="entry name" value="ND/Mrp_TM"/>
</dbReference>
<dbReference type="InterPro" id="IPR003945">
    <property type="entry name" value="NU5C-like"/>
</dbReference>
<dbReference type="InterPro" id="IPR001516">
    <property type="entry name" value="Proton_antipo_N"/>
</dbReference>
<dbReference type="NCBIfam" id="TIGR01974">
    <property type="entry name" value="NDH_I_L"/>
    <property type="match status" value="1"/>
</dbReference>
<dbReference type="PANTHER" id="PTHR42829">
    <property type="entry name" value="NADH-UBIQUINONE OXIDOREDUCTASE CHAIN 5"/>
    <property type="match status" value="1"/>
</dbReference>
<dbReference type="PANTHER" id="PTHR42829:SF2">
    <property type="entry name" value="NADH-UBIQUINONE OXIDOREDUCTASE CHAIN 5"/>
    <property type="match status" value="1"/>
</dbReference>
<dbReference type="Pfam" id="PF00361">
    <property type="entry name" value="Proton_antipo_M"/>
    <property type="match status" value="1"/>
</dbReference>
<dbReference type="Pfam" id="PF00662">
    <property type="entry name" value="Proton_antipo_N"/>
    <property type="match status" value="1"/>
</dbReference>
<dbReference type="PRINTS" id="PR01434">
    <property type="entry name" value="NADHDHGNASE5"/>
</dbReference>
<dbReference type="PRINTS" id="PR01435">
    <property type="entry name" value="NPOXDRDTASE5"/>
</dbReference>
<organism>
    <name type="scientific">Yarrowia lipolytica (strain CLIB 122 / E 150)</name>
    <name type="common">Yeast</name>
    <name type="synonym">Candida lipolytica</name>
    <dbReference type="NCBI Taxonomy" id="284591"/>
    <lineage>
        <taxon>Eukaryota</taxon>
        <taxon>Fungi</taxon>
        <taxon>Dikarya</taxon>
        <taxon>Ascomycota</taxon>
        <taxon>Saccharomycotina</taxon>
        <taxon>Dipodascomycetes</taxon>
        <taxon>Dipodascales</taxon>
        <taxon>Dipodascales incertae sedis</taxon>
        <taxon>Yarrowia</taxon>
    </lineage>
</organism>
<geneLocation type="mitochondrion"/>
<evidence type="ECO:0000250" key="1"/>
<evidence type="ECO:0000255" key="2"/>
<evidence type="ECO:0000269" key="3">
    <source>
    </source>
</evidence>
<evidence type="ECO:0000305" key="4"/>
<evidence type="ECO:0007829" key="5">
    <source>
        <dbReference type="PDB" id="6RFQ"/>
    </source>
</evidence>
<evidence type="ECO:0007829" key="6">
    <source>
        <dbReference type="PDB" id="6YJ4"/>
    </source>
</evidence>
<evidence type="ECO:0007829" key="7">
    <source>
        <dbReference type="PDB" id="7O71"/>
    </source>
</evidence>
<reference key="1">
    <citation type="journal article" date="2001" name="Comp. Funct. Genomics">
        <title>The complete mitochondrial genome of Yarrowia lipolytica.</title>
        <authorList>
            <person name="Kerscher S."/>
            <person name="Durstewitz G."/>
            <person name="Casaregola S."/>
            <person name="Gaillardin C."/>
            <person name="Brandt U."/>
        </authorList>
    </citation>
    <scope>NUCLEOTIDE SEQUENCE [LARGE SCALE GENOMIC DNA]</scope>
    <source>
        <strain>ATCC 20460 / W29 / CBS 7504 / IFP29</strain>
    </source>
</reference>
<reference key="2">
    <citation type="journal article" date="2004" name="Biochim. Biophys. Acta">
        <title>Subunit composition of mitochondrial complex I from the yeast Yarrowia lipolytica.</title>
        <authorList>
            <person name="Abdrakhmanova A."/>
            <person name="Zickermann V."/>
            <person name="Bostina M."/>
            <person name="Radermacher M."/>
            <person name="Schagger H."/>
            <person name="Kerscher S."/>
            <person name="Brandt U."/>
        </authorList>
    </citation>
    <scope>SUBUNIT</scope>
</reference>
<proteinExistence type="evidence at protein level"/>
<keyword id="KW-0002">3D-structure</keyword>
<keyword id="KW-0249">Electron transport</keyword>
<keyword id="KW-0472">Membrane</keyword>
<keyword id="KW-0496">Mitochondrion</keyword>
<keyword id="KW-0999">Mitochondrion inner membrane</keyword>
<keyword id="KW-0520">NAD</keyword>
<keyword id="KW-1185">Reference proteome</keyword>
<keyword id="KW-0679">Respiratory chain</keyword>
<keyword id="KW-1278">Translocase</keyword>
<keyword id="KW-0812">Transmembrane</keyword>
<keyword id="KW-1133">Transmembrane helix</keyword>
<keyword id="KW-0813">Transport</keyword>
<keyword id="KW-0830">Ubiquinone</keyword>
<feature type="chain" id="PRO_0000118162" description="NADH-ubiquinone oxidoreductase chain 5">
    <location>
        <begin position="1"/>
        <end position="655"/>
    </location>
</feature>
<feature type="transmembrane region" description="Helical" evidence="2">
    <location>
        <begin position="3"/>
        <end position="23"/>
    </location>
</feature>
<feature type="transmembrane region" description="Helical" evidence="2">
    <location>
        <begin position="34"/>
        <end position="54"/>
    </location>
</feature>
<feature type="transmembrane region" description="Helical" evidence="2">
    <location>
        <begin position="84"/>
        <end position="104"/>
    </location>
</feature>
<feature type="transmembrane region" description="Helical" evidence="2">
    <location>
        <begin position="116"/>
        <end position="136"/>
    </location>
</feature>
<feature type="transmembrane region" description="Helical" evidence="2">
    <location>
        <begin position="137"/>
        <end position="157"/>
    </location>
</feature>
<feature type="transmembrane region" description="Helical" evidence="2">
    <location>
        <begin position="180"/>
        <end position="200"/>
    </location>
</feature>
<feature type="transmembrane region" description="Helical" evidence="2">
    <location>
        <begin position="204"/>
        <end position="224"/>
    </location>
</feature>
<feature type="transmembrane region" description="Helical" evidence="2">
    <location>
        <begin position="244"/>
        <end position="264"/>
    </location>
</feature>
<feature type="transmembrane region" description="Helical" evidence="2">
    <location>
        <begin position="276"/>
        <end position="296"/>
    </location>
</feature>
<feature type="transmembrane region" description="Helical" evidence="2">
    <location>
        <begin position="304"/>
        <end position="322"/>
    </location>
</feature>
<feature type="transmembrane region" description="Helical" evidence="2">
    <location>
        <begin position="332"/>
        <end position="354"/>
    </location>
</feature>
<feature type="transmembrane region" description="Helical" evidence="2">
    <location>
        <begin position="370"/>
        <end position="390"/>
    </location>
</feature>
<feature type="transmembrane region" description="Helical" evidence="2">
    <location>
        <begin position="413"/>
        <end position="433"/>
    </location>
</feature>
<feature type="transmembrane region" description="Helical" evidence="2">
    <location>
        <begin position="456"/>
        <end position="476"/>
    </location>
</feature>
<feature type="transmembrane region" description="Helical" evidence="2">
    <location>
        <begin position="516"/>
        <end position="536"/>
    </location>
</feature>
<feature type="transmembrane region" description="Helical" evidence="2">
    <location>
        <begin position="629"/>
        <end position="649"/>
    </location>
</feature>
<feature type="helix" evidence="7">
    <location>
        <begin position="4"/>
        <end position="26"/>
    </location>
</feature>
<feature type="helix" evidence="7">
    <location>
        <begin position="28"/>
        <end position="55"/>
    </location>
</feature>
<feature type="strand" evidence="7">
    <location>
        <begin position="60"/>
        <end position="70"/>
    </location>
</feature>
<feature type="strand" evidence="7">
    <location>
        <begin position="73"/>
        <end position="81"/>
    </location>
</feature>
<feature type="helix" evidence="7">
    <location>
        <begin position="83"/>
        <end position="106"/>
    </location>
</feature>
<feature type="turn" evidence="7">
    <location>
        <begin position="107"/>
        <end position="109"/>
    </location>
</feature>
<feature type="helix" evidence="7">
    <location>
        <begin position="113"/>
        <end position="132"/>
    </location>
</feature>
<feature type="strand" evidence="7">
    <location>
        <begin position="133"/>
        <end position="135"/>
    </location>
</feature>
<feature type="helix" evidence="7">
    <location>
        <begin position="136"/>
        <end position="154"/>
    </location>
</feature>
<feature type="helix" evidence="7">
    <location>
        <begin position="161"/>
        <end position="192"/>
    </location>
</feature>
<feature type="helix" evidence="7">
    <location>
        <begin position="197"/>
        <end position="203"/>
    </location>
</feature>
<feature type="helix" evidence="7">
    <location>
        <begin position="204"/>
        <end position="206"/>
    </location>
</feature>
<feature type="helix" evidence="7">
    <location>
        <begin position="209"/>
        <end position="226"/>
    </location>
</feature>
<feature type="helix" evidence="6">
    <location>
        <begin position="230"/>
        <end position="232"/>
    </location>
</feature>
<feature type="helix" evidence="7">
    <location>
        <begin position="235"/>
        <end position="238"/>
    </location>
</feature>
<feature type="helix" evidence="7">
    <location>
        <begin position="239"/>
        <end position="241"/>
    </location>
</feature>
<feature type="helix" evidence="7">
    <location>
        <begin position="244"/>
        <end position="252"/>
    </location>
</feature>
<feature type="helix" evidence="7">
    <location>
        <begin position="257"/>
        <end position="265"/>
    </location>
</feature>
<feature type="helix" evidence="7">
    <location>
        <begin position="267"/>
        <end position="270"/>
    </location>
</feature>
<feature type="helix" evidence="7">
    <location>
        <begin position="274"/>
        <end position="296"/>
    </location>
</feature>
<feature type="helix" evidence="7">
    <location>
        <begin position="301"/>
        <end position="321"/>
    </location>
</feature>
<feature type="helix" evidence="7">
    <location>
        <begin position="325"/>
        <end position="351"/>
    </location>
</feature>
<feature type="strand" evidence="7">
    <location>
        <begin position="353"/>
        <end position="355"/>
    </location>
</feature>
<feature type="helix" evidence="6">
    <location>
        <begin position="360"/>
        <end position="362"/>
    </location>
</feature>
<feature type="turn" evidence="7">
    <location>
        <begin position="366"/>
        <end position="369"/>
    </location>
</feature>
<feature type="helix" evidence="7">
    <location>
        <begin position="371"/>
        <end position="384"/>
    </location>
</feature>
<feature type="helix" evidence="7">
    <location>
        <begin position="391"/>
        <end position="405"/>
    </location>
</feature>
<feature type="strand" evidence="5">
    <location>
        <begin position="406"/>
        <end position="408"/>
    </location>
</feature>
<feature type="helix" evidence="7">
    <location>
        <begin position="409"/>
        <end position="411"/>
    </location>
</feature>
<feature type="helix" evidence="7">
    <location>
        <begin position="412"/>
        <end position="437"/>
    </location>
</feature>
<feature type="helix" evidence="7">
    <location>
        <begin position="445"/>
        <end position="450"/>
    </location>
</feature>
<feature type="helix" evidence="7">
    <location>
        <begin position="456"/>
        <end position="480"/>
    </location>
</feature>
<feature type="strand" evidence="5">
    <location>
        <begin position="482"/>
        <end position="484"/>
    </location>
</feature>
<feature type="turn" evidence="7">
    <location>
        <begin position="494"/>
        <end position="496"/>
    </location>
</feature>
<feature type="helix" evidence="7">
    <location>
        <begin position="501"/>
        <end position="504"/>
    </location>
</feature>
<feature type="helix" evidence="7">
    <location>
        <begin position="508"/>
        <end position="531"/>
    </location>
</feature>
<feature type="helix" evidence="7">
    <location>
        <begin position="533"/>
        <end position="536"/>
    </location>
</feature>
<feature type="helix" evidence="7">
    <location>
        <begin position="541"/>
        <end position="551"/>
    </location>
</feature>
<feature type="turn" evidence="7">
    <location>
        <begin position="552"/>
        <end position="555"/>
    </location>
</feature>
<feature type="helix" evidence="7">
    <location>
        <begin position="556"/>
        <end position="563"/>
    </location>
</feature>
<feature type="helix" evidence="7">
    <location>
        <begin position="565"/>
        <end position="578"/>
    </location>
</feature>
<feature type="turn" evidence="7">
    <location>
        <begin position="579"/>
        <end position="582"/>
    </location>
</feature>
<feature type="helix" evidence="7">
    <location>
        <begin position="583"/>
        <end position="586"/>
    </location>
</feature>
<feature type="helix" evidence="7">
    <location>
        <begin position="589"/>
        <end position="604"/>
    </location>
</feature>
<feature type="helix" evidence="7">
    <location>
        <begin position="605"/>
        <end position="607"/>
    </location>
</feature>
<feature type="helix" evidence="7">
    <location>
        <begin position="613"/>
        <end position="637"/>
    </location>
</feature>
<feature type="helix" evidence="7">
    <location>
        <begin position="639"/>
        <end position="654"/>
    </location>
</feature>